<gene>
    <name evidence="1" type="primary">rplR</name>
    <name type="ordered locus">Rmet_3301</name>
</gene>
<name>RL18_CUPMC</name>
<comment type="function">
    <text evidence="1">This is one of the proteins that bind and probably mediate the attachment of the 5S RNA into the large ribosomal subunit, where it forms part of the central protuberance.</text>
</comment>
<comment type="subunit">
    <text evidence="1">Part of the 50S ribosomal subunit; part of the 5S rRNA/L5/L18/L25 subcomplex. Contacts the 5S and 23S rRNAs.</text>
</comment>
<comment type="similarity">
    <text evidence="1">Belongs to the universal ribosomal protein uL18 family.</text>
</comment>
<organism>
    <name type="scientific">Cupriavidus metallidurans (strain ATCC 43123 / DSM 2839 / NBRC 102507 / CH34)</name>
    <name type="common">Ralstonia metallidurans</name>
    <dbReference type="NCBI Taxonomy" id="266264"/>
    <lineage>
        <taxon>Bacteria</taxon>
        <taxon>Pseudomonadati</taxon>
        <taxon>Pseudomonadota</taxon>
        <taxon>Betaproteobacteria</taxon>
        <taxon>Burkholderiales</taxon>
        <taxon>Burkholderiaceae</taxon>
        <taxon>Cupriavidus</taxon>
    </lineage>
</organism>
<proteinExistence type="inferred from homology"/>
<dbReference type="EMBL" id="CP000352">
    <property type="protein sequence ID" value="ABF10173.1"/>
    <property type="molecule type" value="Genomic_DNA"/>
</dbReference>
<dbReference type="SMR" id="Q1LI53"/>
<dbReference type="STRING" id="266264.Rmet_3301"/>
<dbReference type="KEGG" id="rme:Rmet_3301"/>
<dbReference type="eggNOG" id="COG0256">
    <property type="taxonomic scope" value="Bacteria"/>
</dbReference>
<dbReference type="HOGENOM" id="CLU_098841_0_1_4"/>
<dbReference type="Proteomes" id="UP000002429">
    <property type="component" value="Chromosome"/>
</dbReference>
<dbReference type="GO" id="GO:0022625">
    <property type="term" value="C:cytosolic large ribosomal subunit"/>
    <property type="evidence" value="ECO:0007669"/>
    <property type="project" value="TreeGrafter"/>
</dbReference>
<dbReference type="GO" id="GO:0008097">
    <property type="term" value="F:5S rRNA binding"/>
    <property type="evidence" value="ECO:0007669"/>
    <property type="project" value="TreeGrafter"/>
</dbReference>
<dbReference type="GO" id="GO:0003735">
    <property type="term" value="F:structural constituent of ribosome"/>
    <property type="evidence" value="ECO:0007669"/>
    <property type="project" value="InterPro"/>
</dbReference>
<dbReference type="GO" id="GO:0006412">
    <property type="term" value="P:translation"/>
    <property type="evidence" value="ECO:0007669"/>
    <property type="project" value="UniProtKB-UniRule"/>
</dbReference>
<dbReference type="CDD" id="cd00432">
    <property type="entry name" value="Ribosomal_L18_L5e"/>
    <property type="match status" value="1"/>
</dbReference>
<dbReference type="FunFam" id="3.30.420.100:FF:000001">
    <property type="entry name" value="50S ribosomal protein L18"/>
    <property type="match status" value="1"/>
</dbReference>
<dbReference type="Gene3D" id="3.30.420.100">
    <property type="match status" value="1"/>
</dbReference>
<dbReference type="HAMAP" id="MF_01337_B">
    <property type="entry name" value="Ribosomal_uL18_B"/>
    <property type="match status" value="1"/>
</dbReference>
<dbReference type="InterPro" id="IPR004389">
    <property type="entry name" value="Ribosomal_uL18_bac-type"/>
</dbReference>
<dbReference type="InterPro" id="IPR005484">
    <property type="entry name" value="Ribosomal_uL18_bac/euk"/>
</dbReference>
<dbReference type="NCBIfam" id="TIGR00060">
    <property type="entry name" value="L18_bact"/>
    <property type="match status" value="1"/>
</dbReference>
<dbReference type="PANTHER" id="PTHR12899">
    <property type="entry name" value="39S RIBOSOMAL PROTEIN L18, MITOCHONDRIAL"/>
    <property type="match status" value="1"/>
</dbReference>
<dbReference type="PANTHER" id="PTHR12899:SF3">
    <property type="entry name" value="LARGE RIBOSOMAL SUBUNIT PROTEIN UL18M"/>
    <property type="match status" value="1"/>
</dbReference>
<dbReference type="Pfam" id="PF00861">
    <property type="entry name" value="Ribosomal_L18p"/>
    <property type="match status" value="1"/>
</dbReference>
<dbReference type="SUPFAM" id="SSF53137">
    <property type="entry name" value="Translational machinery components"/>
    <property type="match status" value="1"/>
</dbReference>
<sequence length="119" mass="12861">MMNKKDARLRRARQTRAKIAELKVNRLTVFRTNSHIYAQVYSPCGTQVLASASTAEAEVRKELNGNGATVAAATVVGKRVAEKAKAAGVETVAFDRAGFRFHGRVKALADAAREAGLKF</sequence>
<accession>Q1LI53</accession>
<evidence type="ECO:0000255" key="1">
    <source>
        <dbReference type="HAMAP-Rule" id="MF_01337"/>
    </source>
</evidence>
<evidence type="ECO:0000305" key="2"/>
<keyword id="KW-1185">Reference proteome</keyword>
<keyword id="KW-0687">Ribonucleoprotein</keyword>
<keyword id="KW-0689">Ribosomal protein</keyword>
<keyword id="KW-0694">RNA-binding</keyword>
<keyword id="KW-0699">rRNA-binding</keyword>
<protein>
    <recommendedName>
        <fullName evidence="1">Large ribosomal subunit protein uL18</fullName>
    </recommendedName>
    <alternativeName>
        <fullName evidence="2">50S ribosomal protein L18</fullName>
    </alternativeName>
</protein>
<feature type="chain" id="PRO_0000251352" description="Large ribosomal subunit protein uL18">
    <location>
        <begin position="1"/>
        <end position="119"/>
    </location>
</feature>
<reference key="1">
    <citation type="journal article" date="2010" name="PLoS ONE">
        <title>The complete genome sequence of Cupriavidus metallidurans strain CH34, a master survivalist in harsh and anthropogenic environments.</title>
        <authorList>
            <person name="Janssen P.J."/>
            <person name="Van Houdt R."/>
            <person name="Moors H."/>
            <person name="Monsieurs P."/>
            <person name="Morin N."/>
            <person name="Michaux A."/>
            <person name="Benotmane M.A."/>
            <person name="Leys N."/>
            <person name="Vallaeys T."/>
            <person name="Lapidus A."/>
            <person name="Monchy S."/>
            <person name="Medigue C."/>
            <person name="Taghavi S."/>
            <person name="McCorkle S."/>
            <person name="Dunn J."/>
            <person name="van der Lelie D."/>
            <person name="Mergeay M."/>
        </authorList>
    </citation>
    <scope>NUCLEOTIDE SEQUENCE [LARGE SCALE GENOMIC DNA]</scope>
    <source>
        <strain>ATCC 43123 / DSM 2839 / NBRC 102507 / CH34</strain>
    </source>
</reference>